<proteinExistence type="inferred from homology"/>
<dbReference type="EMBL" id="AAEY01000032">
    <property type="protein sequence ID" value="EAL20015.1"/>
    <property type="molecule type" value="Genomic_DNA"/>
</dbReference>
<dbReference type="RefSeq" id="XP_774662.1">
    <property type="nucleotide sequence ID" value="XM_769569.1"/>
</dbReference>
<dbReference type="SMR" id="P0CR95"/>
<dbReference type="EnsemblFungi" id="AAW43967">
    <property type="protein sequence ID" value="AAW43967"/>
    <property type="gene ID" value="CNF01290"/>
</dbReference>
<dbReference type="GeneID" id="4936894"/>
<dbReference type="KEGG" id="cnb:CNBF3420"/>
<dbReference type="VEuPathDB" id="FungiDB:CNBF3420"/>
<dbReference type="HOGENOM" id="CLU_141397_1_0_1"/>
<dbReference type="OrthoDB" id="1941at5206"/>
<dbReference type="GO" id="GO:0005743">
    <property type="term" value="C:mitochondrial inner membrane"/>
    <property type="evidence" value="ECO:0007669"/>
    <property type="project" value="UniProtKB-SubCell"/>
</dbReference>
<dbReference type="GO" id="GO:0046872">
    <property type="term" value="F:metal ion binding"/>
    <property type="evidence" value="ECO:0007669"/>
    <property type="project" value="UniProtKB-KW"/>
</dbReference>
<dbReference type="GO" id="GO:0015031">
    <property type="term" value="P:protein transport"/>
    <property type="evidence" value="ECO:0007669"/>
    <property type="project" value="UniProtKB-KW"/>
</dbReference>
<dbReference type="Gene3D" id="1.10.287.810">
    <property type="entry name" value="Mitochondrial import inner membrane translocase subunit tim13 like domains"/>
    <property type="match status" value="1"/>
</dbReference>
<dbReference type="InterPro" id="IPR004217">
    <property type="entry name" value="Tim10-like"/>
</dbReference>
<dbReference type="InterPro" id="IPR035427">
    <property type="entry name" value="Tim10-like_dom_sf"/>
</dbReference>
<dbReference type="Pfam" id="PF02953">
    <property type="entry name" value="zf-Tim10_DDP"/>
    <property type="match status" value="1"/>
</dbReference>
<dbReference type="SUPFAM" id="SSF144122">
    <property type="entry name" value="Tim10-like"/>
    <property type="match status" value="1"/>
</dbReference>
<accession>P0CR95</accession>
<accession>Q55QJ6</accession>
<accession>Q5KFM0</accession>
<feature type="chain" id="PRO_0000410309" description="Mitochondrial import inner membrane translocase subunit TIM8">
    <location>
        <begin position="1"/>
        <end position="88"/>
    </location>
</feature>
<feature type="short sequence motif" description="Twin CX3C motif">
    <location>
        <begin position="42"/>
        <end position="66"/>
    </location>
</feature>
<feature type="disulfide bond" evidence="1">
    <location>
        <begin position="42"/>
        <end position="66"/>
    </location>
</feature>
<feature type="disulfide bond" evidence="1">
    <location>
        <begin position="46"/>
        <end position="62"/>
    </location>
</feature>
<gene>
    <name type="primary">TIM8</name>
    <name type="ordered locus">CNBF3420</name>
</gene>
<comment type="function">
    <text evidence="1">Mitochondrial intermembrane chaperone that participates in the import and insertion of some multi-pass transmembrane proteins into the mitochondrial inner membrane. Also required for the transfer of beta-barrel precursors from the TOM complex to the sorting and assembly machinery (SAM complex) of the outer membrane. Acts as a chaperone-like protein that protects the hydrophobic precursors from aggregation and guide them through the mitochondrial intermembrane space. The TIM8-TIM13 complex is non essential and only mediates the import of few proteins, while the predominant TIM9-TIM10 70 kDa complex is crucial and mediates the import of much more proteins (By similarity).</text>
</comment>
<comment type="subunit">
    <text evidence="1">Heterohexamer; composed of 3 copies of TIM8 and 3 copies of TIM13, named soluble 70 kDa complex. Associates with the TIM22 complex, whose core is composed of TIM22 and TIM54. Interacts with the transmembrane regions of multi-pass transmembrane proteins in transit (By similarity).</text>
</comment>
<comment type="subcellular location">
    <subcellularLocation>
        <location evidence="1">Mitochondrion inner membrane</location>
        <topology evidence="1">Peripheral membrane protein</topology>
        <orientation evidence="1">Intermembrane side</orientation>
    </subcellularLocation>
</comment>
<comment type="domain">
    <text evidence="1">The twin CX3C motif contains 4 conserved Cys residues that form 2 disulfide bonds in the mitochondrial intermembrane space. However, during the transit of TIM8 from cytoplasm into mitochondrion, the Cys residues probably coordinate zinc, thereby preventing folding and allowing its transfer across mitochondrial outer membrane (By similarity).</text>
</comment>
<comment type="similarity">
    <text evidence="2">Belongs to the small Tim family.</text>
</comment>
<keyword id="KW-0143">Chaperone</keyword>
<keyword id="KW-1015">Disulfide bond</keyword>
<keyword id="KW-0472">Membrane</keyword>
<keyword id="KW-0479">Metal-binding</keyword>
<keyword id="KW-0496">Mitochondrion</keyword>
<keyword id="KW-0999">Mitochondrion inner membrane</keyword>
<keyword id="KW-0653">Protein transport</keyword>
<keyword id="KW-0811">Translocation</keyword>
<keyword id="KW-0813">Transport</keyword>
<keyword id="KW-0862">Zinc</keyword>
<name>TIM8_CRYNB</name>
<protein>
    <recommendedName>
        <fullName>Mitochondrial import inner membrane translocase subunit TIM8</fullName>
    </recommendedName>
</protein>
<evidence type="ECO:0000250" key="1"/>
<evidence type="ECO:0000305" key="2"/>
<organism>
    <name type="scientific">Cryptococcus neoformans var. neoformans serotype D (strain B-3501A)</name>
    <name type="common">Filobasidiella neoformans</name>
    <dbReference type="NCBI Taxonomy" id="283643"/>
    <lineage>
        <taxon>Eukaryota</taxon>
        <taxon>Fungi</taxon>
        <taxon>Dikarya</taxon>
        <taxon>Basidiomycota</taxon>
        <taxon>Agaricomycotina</taxon>
        <taxon>Tremellomycetes</taxon>
        <taxon>Tremellales</taxon>
        <taxon>Cryptococcaceae</taxon>
        <taxon>Cryptococcus</taxon>
        <taxon>Cryptococcus neoformans species complex</taxon>
    </lineage>
</organism>
<sequence length="88" mass="9810">MSAPTSIPALDEASKKELESFLEQEQAKAKLQASIHELTNTCWNTCITGGISSKFSKSEAQCLENCVDRFLDSSLYIVRQIEAQKQQI</sequence>
<reference key="1">
    <citation type="journal article" date="2005" name="Science">
        <title>The genome of the basidiomycetous yeast and human pathogen Cryptococcus neoformans.</title>
        <authorList>
            <person name="Loftus B.J."/>
            <person name="Fung E."/>
            <person name="Roncaglia P."/>
            <person name="Rowley D."/>
            <person name="Amedeo P."/>
            <person name="Bruno D."/>
            <person name="Vamathevan J."/>
            <person name="Miranda M."/>
            <person name="Anderson I.J."/>
            <person name="Fraser J.A."/>
            <person name="Allen J.E."/>
            <person name="Bosdet I.E."/>
            <person name="Brent M.R."/>
            <person name="Chiu R."/>
            <person name="Doering T.L."/>
            <person name="Donlin M.J."/>
            <person name="D'Souza C.A."/>
            <person name="Fox D.S."/>
            <person name="Grinberg V."/>
            <person name="Fu J."/>
            <person name="Fukushima M."/>
            <person name="Haas B.J."/>
            <person name="Huang J.C."/>
            <person name="Janbon G."/>
            <person name="Jones S.J.M."/>
            <person name="Koo H.L."/>
            <person name="Krzywinski M.I."/>
            <person name="Kwon-Chung K.J."/>
            <person name="Lengeler K.B."/>
            <person name="Maiti R."/>
            <person name="Marra M.A."/>
            <person name="Marra R.E."/>
            <person name="Mathewson C.A."/>
            <person name="Mitchell T.G."/>
            <person name="Pertea M."/>
            <person name="Riggs F.R."/>
            <person name="Salzberg S.L."/>
            <person name="Schein J.E."/>
            <person name="Shvartsbeyn A."/>
            <person name="Shin H."/>
            <person name="Shumway M."/>
            <person name="Specht C.A."/>
            <person name="Suh B.B."/>
            <person name="Tenney A."/>
            <person name="Utterback T.R."/>
            <person name="Wickes B.L."/>
            <person name="Wortman J.R."/>
            <person name="Wye N.H."/>
            <person name="Kronstad J.W."/>
            <person name="Lodge J.K."/>
            <person name="Heitman J."/>
            <person name="Davis R.W."/>
            <person name="Fraser C.M."/>
            <person name="Hyman R.W."/>
        </authorList>
    </citation>
    <scope>NUCLEOTIDE SEQUENCE [LARGE SCALE GENOMIC DNA]</scope>
    <source>
        <strain>B-3501A</strain>
    </source>
</reference>